<name>AAEX_SALPK</name>
<feature type="chain" id="PRO_1000146765" description="Protein AaeX">
    <location>
        <begin position="1"/>
        <end position="67"/>
    </location>
</feature>
<feature type="transmembrane region" description="Helical" evidence="1">
    <location>
        <begin position="3"/>
        <end position="23"/>
    </location>
</feature>
<feature type="transmembrane region" description="Helical" evidence="1">
    <location>
        <begin position="43"/>
        <end position="63"/>
    </location>
</feature>
<evidence type="ECO:0000255" key="1">
    <source>
        <dbReference type="HAMAP-Rule" id="MF_01546"/>
    </source>
</evidence>
<keyword id="KW-1003">Cell membrane</keyword>
<keyword id="KW-0472">Membrane</keyword>
<keyword id="KW-0812">Transmembrane</keyword>
<keyword id="KW-1133">Transmembrane helix</keyword>
<sequence length="67" mass="7879">MSLFPVIVVFGLSFPPIFFELLLSLAIFWLVRRMLVPTGIYDFVWHPALFNTALYCCLFYLISRLFV</sequence>
<reference key="1">
    <citation type="journal article" date="2009" name="BMC Genomics">
        <title>Pseudogene accumulation in the evolutionary histories of Salmonella enterica serovars Paratyphi A and Typhi.</title>
        <authorList>
            <person name="Holt K.E."/>
            <person name="Thomson N.R."/>
            <person name="Wain J."/>
            <person name="Langridge G.C."/>
            <person name="Hasan R."/>
            <person name="Bhutta Z.A."/>
            <person name="Quail M.A."/>
            <person name="Norbertczak H."/>
            <person name="Walker D."/>
            <person name="Simmonds M."/>
            <person name="White B."/>
            <person name="Bason N."/>
            <person name="Mungall K."/>
            <person name="Dougan G."/>
            <person name="Parkhill J."/>
        </authorList>
    </citation>
    <scope>NUCLEOTIDE SEQUENCE [LARGE SCALE GENOMIC DNA]</scope>
    <source>
        <strain>AKU_12601</strain>
    </source>
</reference>
<proteinExistence type="inferred from homology"/>
<organism>
    <name type="scientific">Salmonella paratyphi A (strain AKU_12601)</name>
    <dbReference type="NCBI Taxonomy" id="554290"/>
    <lineage>
        <taxon>Bacteria</taxon>
        <taxon>Pseudomonadati</taxon>
        <taxon>Pseudomonadota</taxon>
        <taxon>Gammaproteobacteria</taxon>
        <taxon>Enterobacterales</taxon>
        <taxon>Enterobacteriaceae</taxon>
        <taxon>Salmonella</taxon>
    </lineage>
</organism>
<protein>
    <recommendedName>
        <fullName evidence="1">Protein AaeX</fullName>
    </recommendedName>
</protein>
<dbReference type="EMBL" id="FM200053">
    <property type="protein sequence ID" value="CAR61269.1"/>
    <property type="molecule type" value="Genomic_DNA"/>
</dbReference>
<dbReference type="RefSeq" id="WP_000051840.1">
    <property type="nucleotide sequence ID" value="NC_011147.1"/>
</dbReference>
<dbReference type="SMR" id="B5BGS0"/>
<dbReference type="GeneID" id="45138179"/>
<dbReference type="KEGG" id="sek:SSPA3019"/>
<dbReference type="HOGENOM" id="CLU_188292_0_0_6"/>
<dbReference type="Proteomes" id="UP000001869">
    <property type="component" value="Chromosome"/>
</dbReference>
<dbReference type="GO" id="GO:0005886">
    <property type="term" value="C:plasma membrane"/>
    <property type="evidence" value="ECO:0007669"/>
    <property type="project" value="UniProtKB-SubCell"/>
</dbReference>
<dbReference type="HAMAP" id="MF_01546">
    <property type="entry name" value="AaeX"/>
    <property type="match status" value="1"/>
</dbReference>
<dbReference type="InterPro" id="IPR012451">
    <property type="entry name" value="DUF1656"/>
</dbReference>
<dbReference type="NCBIfam" id="NF008615">
    <property type="entry name" value="PRK11594.1"/>
    <property type="match status" value="1"/>
</dbReference>
<dbReference type="Pfam" id="PF07869">
    <property type="entry name" value="DUF1656"/>
    <property type="match status" value="1"/>
</dbReference>
<comment type="subcellular location">
    <subcellularLocation>
        <location evidence="1">Cell membrane</location>
        <topology evidence="1">Multi-pass membrane protein</topology>
    </subcellularLocation>
</comment>
<comment type="similarity">
    <text evidence="1">Belongs to the AaeX family.</text>
</comment>
<accession>B5BGS0</accession>
<gene>
    <name evidence="1" type="primary">aaeX</name>
    <name type="ordered locus">SSPA3019</name>
</gene>